<organism>
    <name type="scientific">Chlamydomonas reinhardtii</name>
    <name type="common">Chlamydomonas smithii</name>
    <dbReference type="NCBI Taxonomy" id="3055"/>
    <lineage>
        <taxon>Eukaryota</taxon>
        <taxon>Viridiplantae</taxon>
        <taxon>Chlorophyta</taxon>
        <taxon>core chlorophytes</taxon>
        <taxon>Chlorophyceae</taxon>
        <taxon>CS clade</taxon>
        <taxon>Chlamydomonadales</taxon>
        <taxon>Chlamydomonadaceae</taxon>
        <taxon>Chlamydomonas</taxon>
    </lineage>
</organism>
<feature type="transit peptide" description="Chloroplast" evidence="2">
    <location>
        <begin position="1"/>
        <end position="35"/>
    </location>
</feature>
<feature type="chain" id="PRO_0000002676" description="ATP synthase gamma chain, chloroplastic">
    <location>
        <begin position="36"/>
        <end position="358"/>
    </location>
</feature>
<feature type="active site" evidence="1">
    <location>
        <position position="123"/>
    </location>
</feature>
<feature type="disulfide bond" evidence="1">
    <location>
        <begin position="233"/>
        <end position="239"/>
    </location>
</feature>
<dbReference type="EMBL" id="J04219">
    <property type="protein sequence ID" value="AAA33080.1"/>
    <property type="molecule type" value="mRNA"/>
</dbReference>
<dbReference type="EMBL" id="M73493">
    <property type="protein sequence ID" value="AAA33079.1"/>
    <property type="molecule type" value="Genomic_DNA"/>
</dbReference>
<dbReference type="PIR" id="A32004">
    <property type="entry name" value="PWKMG"/>
</dbReference>
<dbReference type="RefSeq" id="XP_001696335.1">
    <property type="nucleotide sequence ID" value="XM_001696283.1"/>
</dbReference>
<dbReference type="SMR" id="P12113"/>
<dbReference type="PaxDb" id="3055-EDP08312"/>
<dbReference type="ProMEX" id="P12113"/>
<dbReference type="EnsemblPlants" id="PNW81779">
    <property type="protein sequence ID" value="PNW81779"/>
    <property type="gene ID" value="CHLRE_06g259900v5"/>
</dbReference>
<dbReference type="Gramene" id="PNW81779">
    <property type="protein sequence ID" value="PNW81779"/>
    <property type="gene ID" value="CHLRE_06g259900v5"/>
</dbReference>
<dbReference type="KEGG" id="cre:CHLRE_06g259900v5"/>
<dbReference type="eggNOG" id="KOG1531">
    <property type="taxonomic scope" value="Eukaryota"/>
</dbReference>
<dbReference type="HOGENOM" id="CLU_050669_0_0_1"/>
<dbReference type="OMA" id="VMQFEQD"/>
<dbReference type="OrthoDB" id="239812at2759"/>
<dbReference type="BioCyc" id="CHLAMY:CHLREDRAFT_134235-MONOMER"/>
<dbReference type="GO" id="GO:0009535">
    <property type="term" value="C:chloroplast thylakoid membrane"/>
    <property type="evidence" value="ECO:0007669"/>
    <property type="project" value="UniProtKB-SubCell"/>
</dbReference>
<dbReference type="GO" id="GO:0045259">
    <property type="term" value="C:proton-transporting ATP synthase complex"/>
    <property type="evidence" value="ECO:0007669"/>
    <property type="project" value="UniProtKB-KW"/>
</dbReference>
<dbReference type="GO" id="GO:0046933">
    <property type="term" value="F:proton-transporting ATP synthase activity, rotational mechanism"/>
    <property type="evidence" value="ECO:0007669"/>
    <property type="project" value="InterPro"/>
</dbReference>
<dbReference type="CDD" id="cd12151">
    <property type="entry name" value="F1-ATPase_gamma"/>
    <property type="match status" value="1"/>
</dbReference>
<dbReference type="FunFam" id="3.40.1380.10:FF:000006">
    <property type="entry name" value="ATP synthase gamma chain"/>
    <property type="match status" value="1"/>
</dbReference>
<dbReference type="FunFam" id="1.10.287.80:FF:000003">
    <property type="entry name" value="ATP synthase gamma chain, chloroplastic"/>
    <property type="match status" value="1"/>
</dbReference>
<dbReference type="FunFam" id="1.10.287.80:FF:000004">
    <property type="entry name" value="ATP synthase gamma chain, chloroplastic"/>
    <property type="match status" value="1"/>
</dbReference>
<dbReference type="Gene3D" id="3.40.1380.10">
    <property type="match status" value="1"/>
</dbReference>
<dbReference type="Gene3D" id="1.10.287.80">
    <property type="entry name" value="ATP synthase, gamma subunit, helix hairpin domain"/>
    <property type="match status" value="2"/>
</dbReference>
<dbReference type="HAMAP" id="MF_00815">
    <property type="entry name" value="ATP_synth_gamma_bact"/>
    <property type="match status" value="1"/>
</dbReference>
<dbReference type="InterPro" id="IPR035968">
    <property type="entry name" value="ATP_synth_F1_ATPase_gsu"/>
</dbReference>
<dbReference type="InterPro" id="IPR000131">
    <property type="entry name" value="ATP_synth_F1_gsu"/>
</dbReference>
<dbReference type="InterPro" id="IPR023632">
    <property type="entry name" value="ATP_synth_F1_gsu_CS"/>
</dbReference>
<dbReference type="NCBIfam" id="TIGR01146">
    <property type="entry name" value="ATPsyn_F1gamma"/>
    <property type="match status" value="1"/>
</dbReference>
<dbReference type="NCBIfam" id="NF004145">
    <property type="entry name" value="PRK05621.1-2"/>
    <property type="match status" value="1"/>
</dbReference>
<dbReference type="PANTHER" id="PTHR11693">
    <property type="entry name" value="ATP SYNTHASE GAMMA CHAIN"/>
    <property type="match status" value="1"/>
</dbReference>
<dbReference type="PANTHER" id="PTHR11693:SF41">
    <property type="entry name" value="ATP SYNTHASE GAMMA CHAIN, CHLOROPLASTIC"/>
    <property type="match status" value="1"/>
</dbReference>
<dbReference type="Pfam" id="PF00231">
    <property type="entry name" value="ATP-synt"/>
    <property type="match status" value="1"/>
</dbReference>
<dbReference type="PRINTS" id="PR00126">
    <property type="entry name" value="ATPASEGAMMA"/>
</dbReference>
<dbReference type="SUPFAM" id="SSF52943">
    <property type="entry name" value="ATP synthase (F1-ATPase), gamma subunit"/>
    <property type="match status" value="1"/>
</dbReference>
<dbReference type="PROSITE" id="PS00153">
    <property type="entry name" value="ATPASE_GAMMA"/>
    <property type="match status" value="1"/>
</dbReference>
<proteinExistence type="evidence at protein level"/>
<gene>
    <name evidence="3" type="primary">ATPC</name>
</gene>
<comment type="function">
    <text evidence="2">F(1)F(0) ATP synthase produces ATP from ADP in the presence of a proton or sodium gradient. F-type ATPases consist of two structural domains, F(1) containing the extramembraneous catalytic core and F(0) containing the membrane proton channel, linked together by a central stalk and a peripheral stalk. During catalysis, ATP synthesis in the catalytic domain of F(1) is coupled via a rotary mechanism of the central stalk subunits to proton translocation.</text>
</comment>
<comment type="function">
    <text>Produces ATP from ADP in the presence of a proton gradient across the membrane. The gamma chain is believed to be important in regulating ATPase activity and the flow of protons through the CF(0) complex.</text>
</comment>
<comment type="subunit">
    <text evidence="2">F-type ATPases have 2 components, F(1) - the catalytic core - and F(0) - the membrane proton channel. F(1) has five subunits: alpha(3), beta(3), gamma(1), delta(1), epsilon(1). F(0) has four main subunits: a(1), b(1), b'(1) and c(10-14). The alpha and beta chains form an alternating ring which encloses part of the gamma chain. F(1) is attached to F(0) by a central stalk formed by the gamma and epsilon chains, while a peripheral stalk is formed by the delta, b and b' chains.</text>
</comment>
<comment type="subcellular location">
    <subcellularLocation>
        <location evidence="2">Plastid</location>
        <location evidence="2">Chloroplast thylakoid membrane</location>
        <topology evidence="2">Peripheral membrane protein</topology>
    </subcellularLocation>
</comment>
<comment type="miscellaneous">
    <text evidence="4">In plastids the F-type ATPase is also known as CF(1)CF(0).</text>
</comment>
<comment type="similarity">
    <text evidence="4">Belongs to the ATPase gamma chain family.</text>
</comment>
<reference key="1">
    <citation type="journal article" date="1988" name="J. Biol. Chem.">
        <title>cDNA sequence and predicted primary structure of the gamma subunit from the ATP synthase from Chlamydomonas reinhardtii.</title>
        <authorList>
            <person name="Yu L.M."/>
            <person name="Selman B.R."/>
        </authorList>
    </citation>
    <scope>NUCLEOTIDE SEQUENCE [MRNA]</scope>
</reference>
<reference key="2">
    <citation type="journal article" date="1993" name="J. Bioenerg. Biomembr.">
        <title>Complementation of a Chlamydomonas reinhardtii mutant defective in the nuclear gene encoding the chloroplast coupling factor 1 (CF1) gamma-subunit (atpC).</title>
        <authorList>
            <person name="Smart E.J."/>
            <person name="Selman B.R."/>
        </authorList>
    </citation>
    <scope>NUCLEOTIDE SEQUENCE [GENOMIC DNA]</scope>
</reference>
<reference key="3">
    <citation type="journal article" date="1995" name="FEBS Lett.">
        <title>Isolation of CF0CF1 from Chlamydomonas reinhardtii cw15 and the N-terminal amino acid sequences of the CF0CF1 subunits.</title>
        <authorList>
            <person name="Fiedler H.R."/>
            <person name="Schmid R."/>
            <person name="Leu S."/>
            <person name="Shavit N."/>
            <person name="Strotmann H."/>
        </authorList>
    </citation>
    <scope>PROTEIN SEQUENCE OF 36-62</scope>
    <scope>FUNCTION</scope>
    <scope>SUBUNIT</scope>
    <scope>SUBCELLULAR LOCATION</scope>
    <source>
        <strain>cw15</strain>
    </source>
</reference>
<accession>P12113</accession>
<accession>Q9S884</accession>
<sequence>MAAMLASKQGAFMGRSSFAPAPKGVASRGSLQVVAGLKEVRDRIASVKNTQKITDAMKLVAAAKVRRAQEAVVNGRPFSENLVKVLYGVNQRVRQEDVDSPLCAVRPVKSVLLVVLTGDRGLCGGYNNFIIKKTEARYRELTAMGVKVNLVCVGRKGAQYFARRKQYNIVKSFSLGAAPSTKEAQGIADEIFASFIAQESDKVELVFTKFISLINSNPTIQTLLPMTPMGELCDVDGKCVDAADDEIFKLTTKGGEFAVEREKTTIETEALDPSLIFEQEPAQILDALLPLYMSSCLLRSLQEALASELAARMNAMNNASDNAKELKKGLTVQYNKQRQAKITQELAEIVGGAAATSG</sequence>
<keyword id="KW-0066">ATP synthesis</keyword>
<keyword id="KW-0139">CF(1)</keyword>
<keyword id="KW-0150">Chloroplast</keyword>
<keyword id="KW-0903">Direct protein sequencing</keyword>
<keyword id="KW-1015">Disulfide bond</keyword>
<keyword id="KW-0375">Hydrogen ion transport</keyword>
<keyword id="KW-0406">Ion transport</keyword>
<keyword id="KW-0472">Membrane</keyword>
<keyword id="KW-0934">Plastid</keyword>
<keyword id="KW-0793">Thylakoid</keyword>
<keyword id="KW-0809">Transit peptide</keyword>
<keyword id="KW-0813">Transport</keyword>
<protein>
    <recommendedName>
        <fullName evidence="3">ATP synthase gamma chain, chloroplastic</fullName>
    </recommendedName>
    <alternativeName>
        <fullName>F-ATPase gamma subunit</fullName>
    </alternativeName>
</protein>
<evidence type="ECO:0000250" key="1"/>
<evidence type="ECO:0000269" key="2">
    <source>
    </source>
</evidence>
<evidence type="ECO:0000303" key="3">
    <source>
    </source>
</evidence>
<evidence type="ECO:0000305" key="4"/>
<name>ATPG_CHLRE</name>